<name>RNFC_METAC</name>
<keyword id="KW-0004">4Fe-4S</keyword>
<keyword id="KW-1003">Cell membrane</keyword>
<keyword id="KW-0249">Electron transport</keyword>
<keyword id="KW-0408">Iron</keyword>
<keyword id="KW-0411">Iron-sulfur</keyword>
<keyword id="KW-0472">Membrane</keyword>
<keyword id="KW-0479">Metal-binding</keyword>
<keyword id="KW-1185">Reference proteome</keyword>
<keyword id="KW-0677">Repeat</keyword>
<keyword id="KW-1278">Translocase</keyword>
<keyword id="KW-0813">Transport</keyword>
<evidence type="ECO:0000255" key="1">
    <source>
        <dbReference type="HAMAP-Rule" id="MF_00461"/>
    </source>
</evidence>
<evidence type="ECO:0000269" key="2">
    <source>
    </source>
</evidence>
<evidence type="ECO:0000305" key="3"/>
<evidence type="ECO:0000305" key="4">
    <source>
    </source>
</evidence>
<evidence type="ECO:0000312" key="5">
    <source>
        <dbReference type="EMBL" id="AAM04101.1"/>
    </source>
</evidence>
<reference key="1">
    <citation type="journal article" date="2002" name="Genome Res.">
        <title>The genome of Methanosarcina acetivorans reveals extensive metabolic and physiological diversity.</title>
        <authorList>
            <person name="Galagan J.E."/>
            <person name="Nusbaum C."/>
            <person name="Roy A."/>
            <person name="Endrizzi M.G."/>
            <person name="Macdonald P."/>
            <person name="FitzHugh W."/>
            <person name="Calvo S."/>
            <person name="Engels R."/>
            <person name="Smirnov S."/>
            <person name="Atnoor D."/>
            <person name="Brown A."/>
            <person name="Allen N."/>
            <person name="Naylor J."/>
            <person name="Stange-Thomann N."/>
            <person name="DeArellano K."/>
            <person name="Johnson R."/>
            <person name="Linton L."/>
            <person name="McEwan P."/>
            <person name="McKernan K."/>
            <person name="Talamas J."/>
            <person name="Tirrell A."/>
            <person name="Ye W."/>
            <person name="Zimmer A."/>
            <person name="Barber R.D."/>
            <person name="Cann I."/>
            <person name="Graham D.E."/>
            <person name="Grahame D.A."/>
            <person name="Guss A.M."/>
            <person name="Hedderich R."/>
            <person name="Ingram-Smith C."/>
            <person name="Kuettner H.C."/>
            <person name="Krzycki J.A."/>
            <person name="Leigh J.A."/>
            <person name="Li W."/>
            <person name="Liu J."/>
            <person name="Mukhopadhyay B."/>
            <person name="Reeve J.N."/>
            <person name="Smith K."/>
            <person name="Springer T.A."/>
            <person name="Umayam L.A."/>
            <person name="White O."/>
            <person name="White R.H."/>
            <person name="de Macario E.C."/>
            <person name="Ferry J.G."/>
            <person name="Jarrell K.F."/>
            <person name="Jing H."/>
            <person name="Macario A.J.L."/>
            <person name="Paulsen I.T."/>
            <person name="Pritchett M."/>
            <person name="Sowers K.R."/>
            <person name="Swanson R.V."/>
            <person name="Zinder S.H."/>
            <person name="Lander E."/>
            <person name="Metcalf W.W."/>
            <person name="Birren B."/>
        </authorList>
    </citation>
    <scope>NUCLEOTIDE SEQUENCE [LARGE SCALE GENOMIC DNA]</scope>
    <source>
        <strain>ATCC 35395 / DSM 2834 / JCM 12185 / C2A</strain>
    </source>
</reference>
<reference key="2">
    <citation type="journal article" date="2012" name="FEBS J.">
        <title>Electron transport during aceticlastic methanogenesis by Methanosarcina acetivorans involves a sodium-translocating Rnf complex.</title>
        <authorList>
            <person name="Schlegel K."/>
            <person name="Welte C."/>
            <person name="Deppenmeier U."/>
            <person name="Mueller V."/>
        </authorList>
    </citation>
    <scope>FUNCTION</scope>
    <scope>SUBUNIT</scope>
    <scope>DISRUPTION PHENOTYPE</scope>
    <source>
        <strain>ATCC 35395 / DSM 2834 / JCM 12185 / C2A</strain>
    </source>
</reference>
<feature type="chain" id="PRO_0000443489" description="Ion-translocating oxidoreductase complex subunit C">
    <location>
        <begin position="1"/>
        <end position="447"/>
    </location>
</feature>
<feature type="domain" description="4Fe-4S ferredoxin-type 1" evidence="1">
    <location>
        <begin position="359"/>
        <end position="389"/>
    </location>
</feature>
<feature type="domain" description="4Fe-4S ferredoxin-type 2" evidence="1">
    <location>
        <begin position="399"/>
        <end position="430"/>
    </location>
</feature>
<feature type="binding site" evidence="1">
    <location>
        <position position="369"/>
    </location>
    <ligand>
        <name>[4Fe-4S] cluster</name>
        <dbReference type="ChEBI" id="CHEBI:49883"/>
        <label>1</label>
    </ligand>
</feature>
<feature type="binding site" evidence="1">
    <location>
        <position position="372"/>
    </location>
    <ligand>
        <name>[4Fe-4S] cluster</name>
        <dbReference type="ChEBI" id="CHEBI:49883"/>
        <label>1</label>
    </ligand>
</feature>
<feature type="binding site" evidence="1">
    <location>
        <position position="375"/>
    </location>
    <ligand>
        <name>[4Fe-4S] cluster</name>
        <dbReference type="ChEBI" id="CHEBI:49883"/>
        <label>1</label>
    </ligand>
</feature>
<feature type="binding site" evidence="1">
    <location>
        <position position="379"/>
    </location>
    <ligand>
        <name>[4Fe-4S] cluster</name>
        <dbReference type="ChEBI" id="CHEBI:49883"/>
        <label>2</label>
    </ligand>
</feature>
<feature type="binding site" evidence="1">
    <location>
        <position position="408"/>
    </location>
    <ligand>
        <name>[4Fe-4S] cluster</name>
        <dbReference type="ChEBI" id="CHEBI:49883"/>
        <label>2</label>
    </ligand>
</feature>
<feature type="binding site" evidence="1">
    <location>
        <position position="411"/>
    </location>
    <ligand>
        <name>[4Fe-4S] cluster</name>
        <dbReference type="ChEBI" id="CHEBI:49883"/>
        <label>2</label>
    </ligand>
</feature>
<feature type="binding site" evidence="1">
    <location>
        <position position="414"/>
    </location>
    <ligand>
        <name>[4Fe-4S] cluster</name>
        <dbReference type="ChEBI" id="CHEBI:49883"/>
        <label>2</label>
    </ligand>
</feature>
<feature type="binding site" evidence="1">
    <location>
        <position position="418"/>
    </location>
    <ligand>
        <name>[4Fe-4S] cluster</name>
        <dbReference type="ChEBI" id="CHEBI:49883"/>
        <label>1</label>
    </ligand>
</feature>
<accession>Q8TSY4</accession>
<proteinExistence type="evidence at protein level"/>
<comment type="function">
    <text evidence="2">Part of a membrane-bound complex that couples electron transfer with translocation of ions across the membrane. Catalyzes Na(+) transport, most probably coupled to electron transfer from reduced ferredoxin to methanophenazine and heterodisulfide reductase. Involved in heterodisulfide reduction during methanogenesis from acetate.</text>
</comment>
<comment type="cofactor">
    <cofactor evidence="1">
        <name>[4Fe-4S] cluster</name>
        <dbReference type="ChEBI" id="CHEBI:49883"/>
    </cofactor>
    <text evidence="1">Binds 2 [4Fe-4S] clusters per subunit.</text>
</comment>
<comment type="subunit">
    <text evidence="1 4">The Rnf complex is probably composed of eight subunits, including RnfA, RnfB, RnfC, RnfD, RnfE and RnfG.</text>
</comment>
<comment type="subcellular location">
    <subcellularLocation>
        <location evidence="1">Cell membrane</location>
        <topology evidence="1">Peripheral membrane protein</topology>
    </subcellularLocation>
</comment>
<comment type="disruption phenotype">
    <text evidence="2">Deletion of the rnf operon abolishes growth on acetate and ferredoxin:heterodisulfide oxidoreductase-coupled Na(+) transport.</text>
</comment>
<comment type="similarity">
    <text evidence="1">Belongs to the 4Fe4S bacterial-type ferredoxin family. RnfC subfamily.</text>
</comment>
<dbReference type="EC" id="7.2.1.-" evidence="1 3"/>
<dbReference type="EMBL" id="AE010299">
    <property type="protein sequence ID" value="AAM04101.1"/>
    <property type="molecule type" value="Genomic_DNA"/>
</dbReference>
<dbReference type="SMR" id="Q8TSY4"/>
<dbReference type="STRING" id="188937.MA_0659"/>
<dbReference type="TCDB" id="3.D.6.1.3">
    <property type="family name" value="the ion (h(+) or na(+))-translocating nadh:ferredoxin oxidoreductase (nfo or rnf) family"/>
</dbReference>
<dbReference type="EnsemblBacteria" id="AAM04101">
    <property type="protein sequence ID" value="AAM04101"/>
    <property type="gene ID" value="MA_0659"/>
</dbReference>
<dbReference type="KEGG" id="mac:MA_0659"/>
<dbReference type="HOGENOM" id="CLU_010808_6_0_2"/>
<dbReference type="InParanoid" id="Q8TSY4"/>
<dbReference type="PhylomeDB" id="Q8TSY4"/>
<dbReference type="BRENDA" id="7.2.1.2">
    <property type="organism ID" value="7224"/>
</dbReference>
<dbReference type="Proteomes" id="UP000002487">
    <property type="component" value="Chromosome"/>
</dbReference>
<dbReference type="GO" id="GO:0005886">
    <property type="term" value="C:plasma membrane"/>
    <property type="evidence" value="ECO:0007669"/>
    <property type="project" value="UniProtKB-SubCell"/>
</dbReference>
<dbReference type="GO" id="GO:0051539">
    <property type="term" value="F:4 iron, 4 sulfur cluster binding"/>
    <property type="evidence" value="ECO:0007669"/>
    <property type="project" value="UniProtKB-KW"/>
</dbReference>
<dbReference type="GO" id="GO:0009055">
    <property type="term" value="F:electron transfer activity"/>
    <property type="evidence" value="ECO:0007669"/>
    <property type="project" value="InterPro"/>
</dbReference>
<dbReference type="GO" id="GO:0046872">
    <property type="term" value="F:metal ion binding"/>
    <property type="evidence" value="ECO:0007669"/>
    <property type="project" value="UniProtKB-KW"/>
</dbReference>
<dbReference type="GO" id="GO:0016491">
    <property type="term" value="F:oxidoreductase activity"/>
    <property type="evidence" value="ECO:0007669"/>
    <property type="project" value="UniProtKB-ARBA"/>
</dbReference>
<dbReference type="GO" id="GO:0022900">
    <property type="term" value="P:electron transport chain"/>
    <property type="evidence" value="ECO:0007669"/>
    <property type="project" value="UniProtKB-UniRule"/>
</dbReference>
<dbReference type="Gene3D" id="3.10.20.600">
    <property type="match status" value="1"/>
</dbReference>
<dbReference type="Gene3D" id="3.30.70.20">
    <property type="match status" value="1"/>
</dbReference>
<dbReference type="HAMAP" id="MF_00461">
    <property type="entry name" value="RsxC_RnfC"/>
    <property type="match status" value="1"/>
</dbReference>
<dbReference type="InterPro" id="IPR017896">
    <property type="entry name" value="4Fe4S_Fe-S-bd"/>
</dbReference>
<dbReference type="InterPro" id="IPR017900">
    <property type="entry name" value="4Fe4S_Fe_S_CS"/>
</dbReference>
<dbReference type="InterPro" id="IPR010208">
    <property type="entry name" value="Ion_transpt_RnfC/RsxC"/>
</dbReference>
<dbReference type="InterPro" id="IPR049684">
    <property type="entry name" value="Ion_transpt_RnfC_Methano"/>
</dbReference>
<dbReference type="InterPro" id="IPR011538">
    <property type="entry name" value="Nuo51_FMN-bd"/>
</dbReference>
<dbReference type="InterPro" id="IPR037225">
    <property type="entry name" value="Nuo51_FMN-bd_sf"/>
</dbReference>
<dbReference type="InterPro" id="IPR026902">
    <property type="entry name" value="RnfC_N"/>
</dbReference>
<dbReference type="InterPro" id="IPR019554">
    <property type="entry name" value="Soluble_ligand-bd"/>
</dbReference>
<dbReference type="NCBIfam" id="TIGR01945">
    <property type="entry name" value="rnfC"/>
    <property type="match status" value="1"/>
</dbReference>
<dbReference type="NCBIfam" id="NF041837">
    <property type="entry name" value="rnfC_Methano"/>
    <property type="match status" value="1"/>
</dbReference>
<dbReference type="PANTHER" id="PTHR43034">
    <property type="entry name" value="ION-TRANSLOCATING OXIDOREDUCTASE COMPLEX SUBUNIT C"/>
    <property type="match status" value="1"/>
</dbReference>
<dbReference type="PANTHER" id="PTHR43034:SF2">
    <property type="entry name" value="ION-TRANSLOCATING OXIDOREDUCTASE COMPLEX SUBUNIT C"/>
    <property type="match status" value="1"/>
</dbReference>
<dbReference type="Pfam" id="PF01512">
    <property type="entry name" value="Complex1_51K"/>
    <property type="match status" value="1"/>
</dbReference>
<dbReference type="Pfam" id="PF13237">
    <property type="entry name" value="Fer4_10"/>
    <property type="match status" value="1"/>
</dbReference>
<dbReference type="Pfam" id="PF13375">
    <property type="entry name" value="RnfC_N"/>
    <property type="match status" value="1"/>
</dbReference>
<dbReference type="Pfam" id="PF10531">
    <property type="entry name" value="SLBB"/>
    <property type="match status" value="1"/>
</dbReference>
<dbReference type="SUPFAM" id="SSF46548">
    <property type="entry name" value="alpha-helical ferredoxin"/>
    <property type="match status" value="1"/>
</dbReference>
<dbReference type="SUPFAM" id="SSF142019">
    <property type="entry name" value="Nqo1 FMN-binding domain-like"/>
    <property type="match status" value="1"/>
</dbReference>
<dbReference type="SUPFAM" id="SSF142984">
    <property type="entry name" value="Nqo1 middle domain-like"/>
    <property type="match status" value="1"/>
</dbReference>
<dbReference type="PROSITE" id="PS00198">
    <property type="entry name" value="4FE4S_FER_1"/>
    <property type="match status" value="2"/>
</dbReference>
<dbReference type="PROSITE" id="PS51379">
    <property type="entry name" value="4FE4S_FER_2"/>
    <property type="match status" value="2"/>
</dbReference>
<organism>
    <name type="scientific">Methanosarcina acetivorans (strain ATCC 35395 / DSM 2834 / JCM 12185 / C2A)</name>
    <dbReference type="NCBI Taxonomy" id="188937"/>
    <lineage>
        <taxon>Archaea</taxon>
        <taxon>Methanobacteriati</taxon>
        <taxon>Methanobacteriota</taxon>
        <taxon>Stenosarchaea group</taxon>
        <taxon>Methanomicrobia</taxon>
        <taxon>Methanosarcinales</taxon>
        <taxon>Methanosarcinaceae</taxon>
        <taxon>Methanosarcina</taxon>
    </lineage>
</organism>
<protein>
    <recommendedName>
        <fullName evidence="1 3">Ion-translocating oxidoreductase complex subunit C</fullName>
        <ecNumber evidence="1 3">7.2.1.-</ecNumber>
    </recommendedName>
    <alternativeName>
        <fullName evidence="1 3">Rnf electron transport complex subunit C</fullName>
    </alternativeName>
</protein>
<sequence>MKRSLHSKEVANLSDVIKIDKLPEKAIIPMRQHDGIACAPLVKKGAEVIVGQKLGECEGSDLAYVHSPFCGTVNSIELMPNPSGKRILSVVLTPSECAQTVDFVPEKDAPPSRLIEIIKEAGIVEYYEKPTYLALKPGKRIDTLLMNATFPLITHAYLSSLDKVLEGFKLMLEASGISRGVIVLRADDKESIKAFKNAKVDGKPLTVAPIVGMRHADYYLEDVEDQIIVVAAGKITYTPTMMNLLSANVMGRKLPLGYEPPDVHVVVCGVKSAKAVYDAINEGKPYLESAVTVTGAVNNPKTVIVKFGTPIKDVIEACGGYKGEPGKVIVNGSMGGVAVYTDEAPVVKNTVGIVVQTEAEVLRDEATVCIHCARCVDVCPMNLLPGRIAAMADMGMFDRCREYFALNCIECGECAVVCPAKRHLVQLIRYSKLQIMNQKNETVEATE</sequence>
<gene>
    <name evidence="1" type="primary">rnfC</name>
    <name evidence="5" type="ordered locus">MA_0659</name>
</gene>